<gene>
    <name evidence="1" type="primary">leuD</name>
    <name type="ordered locus">Abu_1012</name>
</gene>
<protein>
    <recommendedName>
        <fullName evidence="1">3-isopropylmalate dehydratase small subunit</fullName>
        <ecNumber evidence="1">4.2.1.33</ecNumber>
    </recommendedName>
    <alternativeName>
        <fullName evidence="1">Alpha-IPM isomerase</fullName>
        <shortName evidence="1">IPMI</shortName>
    </alternativeName>
    <alternativeName>
        <fullName evidence="1">Isopropylmalate isomerase</fullName>
    </alternativeName>
</protein>
<dbReference type="EC" id="4.2.1.33" evidence="1"/>
<dbReference type="EMBL" id="CP000361">
    <property type="protein sequence ID" value="ABV67272.1"/>
    <property type="molecule type" value="Genomic_DNA"/>
</dbReference>
<dbReference type="RefSeq" id="WP_004509201.1">
    <property type="nucleotide sequence ID" value="NC_009850.1"/>
</dbReference>
<dbReference type="SMR" id="A8ETJ8"/>
<dbReference type="STRING" id="367737.Abu_1012"/>
<dbReference type="GeneID" id="24303528"/>
<dbReference type="KEGG" id="abu:Abu_1012"/>
<dbReference type="eggNOG" id="COG0066">
    <property type="taxonomic scope" value="Bacteria"/>
</dbReference>
<dbReference type="HOGENOM" id="CLU_081378_1_1_7"/>
<dbReference type="UniPathway" id="UPA00048">
    <property type="reaction ID" value="UER00071"/>
</dbReference>
<dbReference type="Proteomes" id="UP000001136">
    <property type="component" value="Chromosome"/>
</dbReference>
<dbReference type="GO" id="GO:0003861">
    <property type="term" value="F:3-isopropylmalate dehydratase activity"/>
    <property type="evidence" value="ECO:0007669"/>
    <property type="project" value="UniProtKB-UniRule"/>
</dbReference>
<dbReference type="GO" id="GO:0009098">
    <property type="term" value="P:L-leucine biosynthetic process"/>
    <property type="evidence" value="ECO:0007669"/>
    <property type="project" value="UniProtKB-UniRule"/>
</dbReference>
<dbReference type="CDD" id="cd01577">
    <property type="entry name" value="IPMI_Swivel"/>
    <property type="match status" value="1"/>
</dbReference>
<dbReference type="FunFam" id="3.20.19.10:FF:000007">
    <property type="entry name" value="Isopropylmalate/citramalate isomerase small subunit"/>
    <property type="match status" value="1"/>
</dbReference>
<dbReference type="Gene3D" id="3.20.19.10">
    <property type="entry name" value="Aconitase, domain 4"/>
    <property type="match status" value="1"/>
</dbReference>
<dbReference type="HAMAP" id="MF_01032">
    <property type="entry name" value="LeuD_type2"/>
    <property type="match status" value="1"/>
</dbReference>
<dbReference type="InterPro" id="IPR015928">
    <property type="entry name" value="Aconitase/3IPM_dehydase_swvl"/>
</dbReference>
<dbReference type="InterPro" id="IPR000573">
    <property type="entry name" value="AconitaseA/IPMdHydase_ssu_swvl"/>
</dbReference>
<dbReference type="InterPro" id="IPR033940">
    <property type="entry name" value="IPMI_Swivel"/>
</dbReference>
<dbReference type="InterPro" id="IPR050075">
    <property type="entry name" value="LeuD"/>
</dbReference>
<dbReference type="InterPro" id="IPR011827">
    <property type="entry name" value="LeuD_type2/HacB/DmdB"/>
</dbReference>
<dbReference type="NCBIfam" id="TIGR02087">
    <property type="entry name" value="LEUD_arch"/>
    <property type="match status" value="1"/>
</dbReference>
<dbReference type="PANTHER" id="PTHR43345:SF2">
    <property type="entry name" value="3-ISOPROPYLMALATE DEHYDRATASE SMALL SUBUNIT 1"/>
    <property type="match status" value="1"/>
</dbReference>
<dbReference type="PANTHER" id="PTHR43345">
    <property type="entry name" value="3-ISOPROPYLMALATE DEHYDRATASE SMALL SUBUNIT 2-RELATED-RELATED"/>
    <property type="match status" value="1"/>
</dbReference>
<dbReference type="Pfam" id="PF00694">
    <property type="entry name" value="Aconitase_C"/>
    <property type="match status" value="1"/>
</dbReference>
<dbReference type="SUPFAM" id="SSF52016">
    <property type="entry name" value="LeuD/IlvD-like"/>
    <property type="match status" value="1"/>
</dbReference>
<keyword id="KW-0028">Amino-acid biosynthesis</keyword>
<keyword id="KW-0100">Branched-chain amino acid biosynthesis</keyword>
<keyword id="KW-0432">Leucine biosynthesis</keyword>
<keyword id="KW-0456">Lyase</keyword>
<keyword id="KW-1185">Reference proteome</keyword>
<organism>
    <name type="scientific">Aliarcobacter butzleri (strain RM4018)</name>
    <name type="common">Arcobacter butzleri</name>
    <dbReference type="NCBI Taxonomy" id="367737"/>
    <lineage>
        <taxon>Bacteria</taxon>
        <taxon>Pseudomonadati</taxon>
        <taxon>Campylobacterota</taxon>
        <taxon>Epsilonproteobacteria</taxon>
        <taxon>Campylobacterales</taxon>
        <taxon>Arcobacteraceae</taxon>
        <taxon>Aliarcobacter</taxon>
    </lineage>
</organism>
<comment type="function">
    <text evidence="1">Catalyzes the isomerization between 2-isopropylmalate and 3-isopropylmalate, via the formation of 2-isopropylmaleate.</text>
</comment>
<comment type="catalytic activity">
    <reaction evidence="1">
        <text>(2R,3S)-3-isopropylmalate = (2S)-2-isopropylmalate</text>
        <dbReference type="Rhea" id="RHEA:32287"/>
        <dbReference type="ChEBI" id="CHEBI:1178"/>
        <dbReference type="ChEBI" id="CHEBI:35121"/>
        <dbReference type="EC" id="4.2.1.33"/>
    </reaction>
</comment>
<comment type="pathway">
    <text evidence="1">Amino-acid biosynthesis; L-leucine biosynthesis; L-leucine from 3-methyl-2-oxobutanoate: step 2/4.</text>
</comment>
<comment type="subunit">
    <text evidence="1">Heterodimer of LeuC and LeuD.</text>
</comment>
<comment type="similarity">
    <text evidence="1">Belongs to the LeuD family. LeuD type 2 subfamily.</text>
</comment>
<reference key="1">
    <citation type="journal article" date="2007" name="PLoS ONE">
        <title>The complete genome sequence and analysis of the Epsilonproteobacterium Arcobacter butzleri.</title>
        <authorList>
            <person name="Miller W.G."/>
            <person name="Parker C.T."/>
            <person name="Rubenfield M."/>
            <person name="Mendz G.L."/>
            <person name="Woesten M.M.S.M."/>
            <person name="Ussery D.W."/>
            <person name="Stolz J.F."/>
            <person name="Binnewies T.T."/>
            <person name="Hallin P.F."/>
            <person name="Wang G."/>
            <person name="Malek J.A."/>
            <person name="Rogosin A."/>
            <person name="Stanker L.H."/>
            <person name="Mandrell R.E."/>
        </authorList>
    </citation>
    <scope>NUCLEOTIDE SEQUENCE [LARGE SCALE GENOMIC DNA]</scope>
    <source>
        <strain>RM4018</strain>
    </source>
</reference>
<name>LEUD_ALIB4</name>
<evidence type="ECO:0000255" key="1">
    <source>
        <dbReference type="HAMAP-Rule" id="MF_01032"/>
    </source>
</evidence>
<accession>A8ETJ8</accession>
<proteinExistence type="inferred from homology"/>
<sequence length="166" mass="18223">MNTITGKVWNFGANIDTDVIIAARYLNSSDPEHLAKYVMEDADPEFPKKLKKGDIIVAGENFGCGSSREHAPIALKAAGIAAVVAPSFARIFYRNAFNMGLPIFELPESLEIKEGEEISINLDKGEITNNTTKKTYKFIPIPPFMQELIATGGLINYAKAEMKKAI</sequence>
<feature type="chain" id="PRO_1000072962" description="3-isopropylmalate dehydratase small subunit">
    <location>
        <begin position="1"/>
        <end position="166"/>
    </location>
</feature>